<organism>
    <name type="scientific">Mus musculus</name>
    <name type="common">Mouse</name>
    <dbReference type="NCBI Taxonomy" id="10090"/>
    <lineage>
        <taxon>Eukaryota</taxon>
        <taxon>Metazoa</taxon>
        <taxon>Chordata</taxon>
        <taxon>Craniata</taxon>
        <taxon>Vertebrata</taxon>
        <taxon>Euteleostomi</taxon>
        <taxon>Mammalia</taxon>
        <taxon>Eutheria</taxon>
        <taxon>Euarchontoglires</taxon>
        <taxon>Glires</taxon>
        <taxon>Rodentia</taxon>
        <taxon>Myomorpha</taxon>
        <taxon>Muroidea</taxon>
        <taxon>Muridae</taxon>
        <taxon>Murinae</taxon>
        <taxon>Mus</taxon>
        <taxon>Mus</taxon>
    </lineage>
</organism>
<reference key="1">
    <citation type="journal article" date="2011" name="Biochem. Biophys. Res. Commun.">
        <title>Podocan-like protein: a novel small leucine-rich repeat matrix protein in bone.</title>
        <authorList>
            <person name="Mochida Y."/>
            <person name="Kaku M."/>
            <person name="Yoshida K."/>
            <person name="Katafuchi M."/>
            <person name="Atsawasuwan P."/>
            <person name="Yamauchi M."/>
        </authorList>
    </citation>
    <scope>NUCLEOTIDE SEQUENCE [MRNA]</scope>
    <scope>SUBCELLULAR LOCATION</scope>
    <scope>TISSUE SPECIFICITY</scope>
    <scope>GLYCOSYLATION</scope>
    <source>
        <strain evidence="4">C57BL/6J</strain>
        <tissue evidence="4">Calvaria</tissue>
    </source>
</reference>
<reference key="2">
    <citation type="journal article" date="2009" name="PLoS Biol.">
        <title>Lineage-specific biology revealed by a finished genome assembly of the mouse.</title>
        <authorList>
            <person name="Church D.M."/>
            <person name="Goodstadt L."/>
            <person name="Hillier L.W."/>
            <person name="Zody M.C."/>
            <person name="Goldstein S."/>
            <person name="She X."/>
            <person name="Bult C.J."/>
            <person name="Agarwala R."/>
            <person name="Cherry J.L."/>
            <person name="DiCuccio M."/>
            <person name="Hlavina W."/>
            <person name="Kapustin Y."/>
            <person name="Meric P."/>
            <person name="Maglott D."/>
            <person name="Birtle Z."/>
            <person name="Marques A.C."/>
            <person name="Graves T."/>
            <person name="Zhou S."/>
            <person name="Teague B."/>
            <person name="Potamousis K."/>
            <person name="Churas C."/>
            <person name="Place M."/>
            <person name="Herschleb J."/>
            <person name="Runnheim R."/>
            <person name="Forrest D."/>
            <person name="Amos-Landgraf J."/>
            <person name="Schwartz D.C."/>
            <person name="Cheng Z."/>
            <person name="Lindblad-Toh K."/>
            <person name="Eichler E.E."/>
            <person name="Ponting C.P."/>
        </authorList>
    </citation>
    <scope>NUCLEOTIDE SEQUENCE [LARGE SCALE GENOMIC DNA]</scope>
    <source>
        <strain evidence="6">C57BL/6J</strain>
    </source>
</reference>
<reference key="3">
    <citation type="journal article" date="2004" name="Genome Res.">
        <title>The status, quality, and expansion of the NIH full-length cDNA project: the Mammalian Gene Collection (MGC).</title>
        <authorList>
            <consortium name="The MGC Project Team"/>
        </authorList>
    </citation>
    <scope>NUCLEOTIDE SEQUENCE [LARGE SCALE MRNA]</scope>
</reference>
<sequence length="559" mass="62519">MRPQELLLLLLMLKWSLAHTEDPAFPHLGDSSQPLPRPCPWRCSCPRDDTVDCAGLDLRIFPDNITRAARHLSLQNNQLRELPYNELSRLSGLRTLDLHSNLITSEGLPDEAFESLNQLENFYVAHNKLSVAPQFLPRSLRVADLAANEVVEIFPLTFGEKPALRSVYLHNNRLRNTGLPPNTFHGSEVITTLSLSSNQLSYLPPSLPASLERLHLQNNLISKVPRGALSLQTHLRELYLQHNQLTDSGLDATTFSKLSSLEYLDLSHNQLATVPEGLPGTLTILHLGRNCIRHVEAVRLHKARGLRYLLLQHNKLGASALPKGTLRPLRALHTLHLYGNKLERVPPALPRHLQALVMPHNHVAALGARDLVSARALAELNLAYNSLASAHVHPSAFRRLRALRSLDLAGNQLTRLPEGLPASLRSLRLQRNQLRTLEPEQLAGLNKLRELNLAHNRLRVGDIGPGTWHELQALKVLDLSHNELSFVPPDLPEALEELYLQANRISHVGPEAFLSTPHLRALFLRANRLHMTSIRAEALQGLTHLRVVDTAENPEQVLV</sequence>
<accession>Q6P3Y9</accession>
<accession>A0A0R4J142</accession>
<accession>A1X874</accession>
<name>PONL1_MOUSE</name>
<gene>
    <name evidence="5" type="primary">Podnl1</name>
    <name type="synonym">Gm506</name>
</gene>
<feature type="signal peptide" evidence="1">
    <location>
        <begin position="1"/>
        <end position="20"/>
    </location>
</feature>
<feature type="chain" id="PRO_0000311188" description="Podocan-like protein 1">
    <location>
        <begin position="21"/>
        <end position="559"/>
    </location>
</feature>
<feature type="repeat" description="LRR 1" evidence="1">
    <location>
        <begin position="66"/>
        <end position="89"/>
    </location>
</feature>
<feature type="repeat" description="LRR 2" evidence="1">
    <location>
        <begin position="90"/>
        <end position="115"/>
    </location>
</feature>
<feature type="repeat" description="LRR 3" evidence="1">
    <location>
        <begin position="117"/>
        <end position="139"/>
    </location>
</feature>
<feature type="repeat" description="LRR 4" evidence="1">
    <location>
        <begin position="140"/>
        <end position="160"/>
    </location>
</feature>
<feature type="repeat" description="LRR 5" evidence="1">
    <location>
        <begin position="161"/>
        <end position="186"/>
    </location>
</feature>
<feature type="repeat" description="LRR 6" evidence="1">
    <location>
        <begin position="188"/>
        <end position="208"/>
    </location>
</feature>
<feature type="repeat" description="LRR 7" evidence="1">
    <location>
        <begin position="209"/>
        <end position="231"/>
    </location>
</feature>
<feature type="repeat" description="LRR 8" evidence="1">
    <location>
        <begin position="233"/>
        <end position="257"/>
    </location>
</feature>
<feature type="repeat" description="LRR 9" evidence="1">
    <location>
        <begin position="258"/>
        <end position="281"/>
    </location>
</feature>
<feature type="repeat" description="LRR 10" evidence="1">
    <location>
        <begin position="283"/>
        <end position="302"/>
    </location>
</feature>
<feature type="repeat" description="LRR 11" evidence="1">
    <location>
        <begin position="303"/>
        <end position="328"/>
    </location>
</feature>
<feature type="repeat" description="LRR 12" evidence="1">
    <location>
        <begin position="329"/>
        <end position="352"/>
    </location>
</feature>
<feature type="repeat" description="LRR 13" evidence="1">
    <location>
        <begin position="354"/>
        <end position="373"/>
    </location>
</feature>
<feature type="repeat" description="LRR 14" evidence="1">
    <location>
        <begin position="374"/>
        <end position="399"/>
    </location>
</feature>
<feature type="repeat" description="LRR 15" evidence="1">
    <location>
        <begin position="400"/>
        <end position="423"/>
    </location>
</feature>
<feature type="repeat" description="LRR 16" evidence="1">
    <location>
        <begin position="425"/>
        <end position="444"/>
    </location>
</feature>
<feature type="repeat" description="LRR 17" evidence="1">
    <location>
        <begin position="445"/>
        <end position="470"/>
    </location>
</feature>
<feature type="repeat" description="LRR 18" evidence="1">
    <location>
        <begin position="471"/>
        <end position="494"/>
    </location>
</feature>
<feature type="repeat" description="LRR 19" evidence="1">
    <location>
        <begin position="496"/>
        <end position="515"/>
    </location>
</feature>
<feature type="repeat" description="LRR 20" evidence="1">
    <location>
        <begin position="517"/>
        <end position="541"/>
    </location>
</feature>
<feature type="glycosylation site" description="N-linked (GlcNAc...) asparagine" evidence="1">
    <location>
        <position position="64"/>
    </location>
</feature>
<feature type="sequence conflict" description="In Ref. 3; AAH63764." evidence="3" ref="3">
    <original>V</original>
    <variation>A</variation>
    <location>
        <position position="189"/>
    </location>
</feature>
<feature type="sequence conflict" description="In Ref. 3; AAH63764." evidence="3" ref="3">
    <original>H</original>
    <variation>R</variation>
    <location>
        <position position="391"/>
    </location>
</feature>
<feature type="sequence conflict" description="In Ref. 3; AAH63764." evidence="3" ref="3">
    <original>A</original>
    <variation>T</variation>
    <location>
        <position position="454"/>
    </location>
</feature>
<feature type="sequence conflict" description="In Ref. 3; AAH63764." evidence="3" ref="3">
    <original>Y</original>
    <variation>H</variation>
    <location>
        <position position="499"/>
    </location>
</feature>
<feature type="sequence conflict" description="In Ref. 3; AAH63764." evidence="3" ref="3">
    <original>R</original>
    <variation>A</variation>
    <location>
        <position position="535"/>
    </location>
</feature>
<protein>
    <recommendedName>
        <fullName>Podocan-like protein 1</fullName>
    </recommendedName>
</protein>
<comment type="subcellular location">
    <subcellularLocation>
        <location evidence="2">Secreted</location>
        <location evidence="2">Extracellular space</location>
        <location evidence="2">Extracellular matrix</location>
    </subcellularLocation>
</comment>
<comment type="tissue specificity">
    <text evidence="2">Detected in bone where it is expressed in osteoblasts and newly formed bone matrix (at protein level). Also expressed weakly in osteoclasts (at protein level). Expressed strongly in calvaria, lung and femur, and weakly in kidney.</text>
</comment>
<comment type="PTM">
    <text evidence="2">N-glycosylated.</text>
</comment>
<comment type="similarity">
    <text evidence="3">Belongs to the small leucine-rich proteoglycan (SLRP) family. SLRP class V subfamily.</text>
</comment>
<comment type="sequence caution" evidence="3">
    <conflict type="erroneous termination">
        <sequence resource="EMBL-CDS" id="AAH63764"/>
    </conflict>
    <text>Extended C-terminus.</text>
</comment>
<proteinExistence type="evidence at protein level"/>
<evidence type="ECO:0000255" key="1"/>
<evidence type="ECO:0000269" key="2">
    <source>
    </source>
</evidence>
<evidence type="ECO:0000305" key="3"/>
<evidence type="ECO:0000312" key="4">
    <source>
        <dbReference type="EMBL" id="ABC17993.1"/>
    </source>
</evidence>
<evidence type="ECO:0000312" key="5">
    <source>
        <dbReference type="MGI" id="MGI:2685352"/>
    </source>
</evidence>
<evidence type="ECO:0000312" key="6">
    <source>
        <dbReference type="Proteomes" id="UP000000589"/>
    </source>
</evidence>
<dbReference type="EMBL" id="DQ303463">
    <property type="protein sequence ID" value="ABC17993.1"/>
    <property type="molecule type" value="mRNA"/>
</dbReference>
<dbReference type="EMBL" id="AC159266">
    <property type="status" value="NOT_ANNOTATED_CDS"/>
    <property type="molecule type" value="Genomic_DNA"/>
</dbReference>
<dbReference type="EMBL" id="BC063764">
    <property type="protein sequence ID" value="AAH63764.1"/>
    <property type="status" value="ALT_SEQ"/>
    <property type="molecule type" value="mRNA"/>
</dbReference>
<dbReference type="CCDS" id="CCDS52615.1"/>
<dbReference type="RefSeq" id="NP_001013402.2">
    <property type="nucleotide sequence ID" value="NM_001013384.3"/>
</dbReference>
<dbReference type="SMR" id="Q6P3Y9"/>
<dbReference type="BioGRID" id="232659">
    <property type="interactions" value="2"/>
</dbReference>
<dbReference type="FunCoup" id="Q6P3Y9">
    <property type="interactions" value="20"/>
</dbReference>
<dbReference type="STRING" id="10090.ENSMUSP00000091073"/>
<dbReference type="GlyCosmos" id="Q6P3Y9">
    <property type="glycosylation" value="1 site, No reported glycans"/>
</dbReference>
<dbReference type="GlyGen" id="Q6P3Y9">
    <property type="glycosylation" value="1 site, 1 N-linked glycan (1 site)"/>
</dbReference>
<dbReference type="iPTMnet" id="Q6P3Y9"/>
<dbReference type="PhosphoSitePlus" id="Q6P3Y9"/>
<dbReference type="PaxDb" id="10090-ENSMUSP00000091073"/>
<dbReference type="Antibodypedia" id="50255">
    <property type="antibodies" value="69 antibodies from 17 providers"/>
</dbReference>
<dbReference type="DNASU" id="244550"/>
<dbReference type="Ensembl" id="ENSMUST00000093380.5">
    <property type="protein sequence ID" value="ENSMUSP00000091073.5"/>
    <property type="gene ID" value="ENSMUSG00000012889.9"/>
</dbReference>
<dbReference type="GeneID" id="244550"/>
<dbReference type="KEGG" id="mmu:244550"/>
<dbReference type="UCSC" id="uc012gha.1">
    <property type="organism name" value="mouse"/>
</dbReference>
<dbReference type="AGR" id="MGI:2685352"/>
<dbReference type="CTD" id="79883"/>
<dbReference type="MGI" id="MGI:2685352">
    <property type="gene designation" value="Podnl1"/>
</dbReference>
<dbReference type="VEuPathDB" id="HostDB:ENSMUSG00000012889"/>
<dbReference type="eggNOG" id="KOG0619">
    <property type="taxonomic scope" value="Eukaryota"/>
</dbReference>
<dbReference type="GeneTree" id="ENSGT00940000162059"/>
<dbReference type="InParanoid" id="Q6P3Y9"/>
<dbReference type="OMA" id="HLGRNCI"/>
<dbReference type="OrthoDB" id="10027416at2759"/>
<dbReference type="PhylomeDB" id="Q6P3Y9"/>
<dbReference type="TreeFam" id="TF336377"/>
<dbReference type="BioGRID-ORCS" id="244550">
    <property type="hits" value="2 hits in 78 CRISPR screens"/>
</dbReference>
<dbReference type="PRO" id="PR:Q6P3Y9"/>
<dbReference type="Proteomes" id="UP000000589">
    <property type="component" value="Chromosome 8"/>
</dbReference>
<dbReference type="RNAct" id="Q6P3Y9">
    <property type="molecule type" value="protein"/>
</dbReference>
<dbReference type="Bgee" id="ENSMUSG00000012889">
    <property type="expression patterns" value="Expressed in epiblast cell in embryo and 26 other cell types or tissues"/>
</dbReference>
<dbReference type="GO" id="GO:0062023">
    <property type="term" value="C:collagen-containing extracellular matrix"/>
    <property type="evidence" value="ECO:0000314"/>
    <property type="project" value="UniProtKB"/>
</dbReference>
<dbReference type="GO" id="GO:0005576">
    <property type="term" value="C:extracellular region"/>
    <property type="evidence" value="ECO:0007669"/>
    <property type="project" value="UniProtKB-KW"/>
</dbReference>
<dbReference type="FunFam" id="3.80.10.10:FF:002357">
    <property type="entry name" value="Podocan-like protein 1"/>
    <property type="match status" value="1"/>
</dbReference>
<dbReference type="Gene3D" id="3.80.10.10">
    <property type="entry name" value="Ribonuclease Inhibitor"/>
    <property type="match status" value="3"/>
</dbReference>
<dbReference type="InterPro" id="IPR001611">
    <property type="entry name" value="Leu-rich_rpt"/>
</dbReference>
<dbReference type="InterPro" id="IPR003591">
    <property type="entry name" value="Leu-rich_rpt_typical-subtyp"/>
</dbReference>
<dbReference type="InterPro" id="IPR032675">
    <property type="entry name" value="LRR_dom_sf"/>
</dbReference>
<dbReference type="InterPro" id="IPR050333">
    <property type="entry name" value="SLRP"/>
</dbReference>
<dbReference type="PANTHER" id="PTHR45712">
    <property type="entry name" value="AGAP008170-PA"/>
    <property type="match status" value="1"/>
</dbReference>
<dbReference type="PANTHER" id="PTHR45712:SF5">
    <property type="entry name" value="PODOCAN-LIKE PROTEIN 1"/>
    <property type="match status" value="1"/>
</dbReference>
<dbReference type="Pfam" id="PF00560">
    <property type="entry name" value="LRR_1"/>
    <property type="match status" value="1"/>
</dbReference>
<dbReference type="Pfam" id="PF13855">
    <property type="entry name" value="LRR_8"/>
    <property type="match status" value="5"/>
</dbReference>
<dbReference type="PRINTS" id="PR00019">
    <property type="entry name" value="LEURICHRPT"/>
</dbReference>
<dbReference type="SMART" id="SM00364">
    <property type="entry name" value="LRR_BAC"/>
    <property type="match status" value="8"/>
</dbReference>
<dbReference type="SMART" id="SM00365">
    <property type="entry name" value="LRR_SD22"/>
    <property type="match status" value="5"/>
</dbReference>
<dbReference type="SMART" id="SM00369">
    <property type="entry name" value="LRR_TYP"/>
    <property type="match status" value="17"/>
</dbReference>
<dbReference type="SUPFAM" id="SSF52058">
    <property type="entry name" value="L domain-like"/>
    <property type="match status" value="2"/>
</dbReference>
<dbReference type="PROSITE" id="PS51450">
    <property type="entry name" value="LRR"/>
    <property type="match status" value="15"/>
</dbReference>
<keyword id="KW-0272">Extracellular matrix</keyword>
<keyword id="KW-0325">Glycoprotein</keyword>
<keyword id="KW-0433">Leucine-rich repeat</keyword>
<keyword id="KW-1185">Reference proteome</keyword>
<keyword id="KW-0677">Repeat</keyword>
<keyword id="KW-0964">Secreted</keyword>
<keyword id="KW-0732">Signal</keyword>